<feature type="chain" id="PRO_0000143602" description="Maturase K">
    <location>
        <begin position="1"/>
        <end position="522"/>
    </location>
</feature>
<protein>
    <recommendedName>
        <fullName evidence="1">Maturase K</fullName>
    </recommendedName>
    <alternativeName>
        <fullName evidence="1">Intron maturase</fullName>
    </alternativeName>
</protein>
<comment type="function">
    <text evidence="1">Usually encoded in the trnK tRNA gene intron. Probably assists in splicing its own and other chloroplast group II introns.</text>
</comment>
<comment type="subcellular location">
    <subcellularLocation>
        <location>Plastid</location>
        <location>Chloroplast</location>
    </subcellularLocation>
</comment>
<comment type="similarity">
    <text evidence="1">Belongs to the intron maturase 2 family. MatK subfamily.</text>
</comment>
<organism>
    <name type="scientific">Pillansia templemannii</name>
    <dbReference type="NCBI Taxonomy" id="58971"/>
    <lineage>
        <taxon>Eukaryota</taxon>
        <taxon>Viridiplantae</taxon>
        <taxon>Streptophyta</taxon>
        <taxon>Embryophyta</taxon>
        <taxon>Tracheophyta</taxon>
        <taxon>Spermatophyta</taxon>
        <taxon>Magnoliopsida</taxon>
        <taxon>Liliopsida</taxon>
        <taxon>Asparagales</taxon>
        <taxon>Iridaceae</taxon>
        <taxon>Crocoideae</taxon>
        <taxon>Watsonieae</taxon>
        <taxon>Pillansia</taxon>
    </lineage>
</organism>
<dbReference type="EMBL" id="AJ579978">
    <property type="protein sequence ID" value="CAE45249.1"/>
    <property type="molecule type" value="Genomic_DNA"/>
</dbReference>
<dbReference type="GO" id="GO:0009507">
    <property type="term" value="C:chloroplast"/>
    <property type="evidence" value="ECO:0007669"/>
    <property type="project" value="UniProtKB-SubCell"/>
</dbReference>
<dbReference type="GO" id="GO:0003723">
    <property type="term" value="F:RNA binding"/>
    <property type="evidence" value="ECO:0007669"/>
    <property type="project" value="UniProtKB-KW"/>
</dbReference>
<dbReference type="GO" id="GO:0006397">
    <property type="term" value="P:mRNA processing"/>
    <property type="evidence" value="ECO:0007669"/>
    <property type="project" value="UniProtKB-KW"/>
</dbReference>
<dbReference type="GO" id="GO:0008380">
    <property type="term" value="P:RNA splicing"/>
    <property type="evidence" value="ECO:0007669"/>
    <property type="project" value="UniProtKB-UniRule"/>
</dbReference>
<dbReference type="GO" id="GO:0008033">
    <property type="term" value="P:tRNA processing"/>
    <property type="evidence" value="ECO:0007669"/>
    <property type="project" value="UniProtKB-KW"/>
</dbReference>
<dbReference type="HAMAP" id="MF_01390">
    <property type="entry name" value="MatK"/>
    <property type="match status" value="1"/>
</dbReference>
<dbReference type="InterPro" id="IPR024937">
    <property type="entry name" value="Domain_X"/>
</dbReference>
<dbReference type="InterPro" id="IPR002866">
    <property type="entry name" value="Maturase_MatK"/>
</dbReference>
<dbReference type="InterPro" id="IPR024942">
    <property type="entry name" value="Maturase_MatK_N"/>
</dbReference>
<dbReference type="PANTHER" id="PTHR34811">
    <property type="entry name" value="MATURASE K"/>
    <property type="match status" value="1"/>
</dbReference>
<dbReference type="PANTHER" id="PTHR34811:SF1">
    <property type="entry name" value="MATURASE K"/>
    <property type="match status" value="1"/>
</dbReference>
<dbReference type="Pfam" id="PF01348">
    <property type="entry name" value="Intron_maturas2"/>
    <property type="match status" value="1"/>
</dbReference>
<dbReference type="Pfam" id="PF01824">
    <property type="entry name" value="MatK_N"/>
    <property type="match status" value="1"/>
</dbReference>
<gene>
    <name evidence="1" type="primary">matK</name>
</gene>
<keyword id="KW-0150">Chloroplast</keyword>
<keyword id="KW-0507">mRNA processing</keyword>
<keyword id="KW-0934">Plastid</keyword>
<keyword id="KW-0694">RNA-binding</keyword>
<keyword id="KW-0819">tRNA processing</keyword>
<accession>Q4H186</accession>
<name>MATK_PILTE</name>
<sequence>MEELQGYFEKDRSRQQPFLYPLLFQEYIYALAHDRGLNRNGSIFYEPLEVFGYDSKSSLALVKRLITRIYQQHFFLSSVNDSNQNQFVGHHHTNFFYSRFYSQMISEGFAIIVEIPFSLQLVSYLKEKEIPKSHNLRSIHSIFPFLEDKLLHFNYVSDILIPHPIHMEILVQILQCWIQDVPLLHFLRFFLHEYHNWNSFFITQNKSIYLFSKETKRLFRFLYNSYVYECEFVFVFLRKYSSYLRFTSFRTFLERRYFYGKMEHLQTEHLIIVCCDYFNGTLWSFKDPFMHYARCQGKAILVSKGTHLLMKKWKYNFVNLWQYYFHFWYQSYRIHINQLSKHSFHFLGYLSSLLKNSSTVRNQMLDNSFLIDTLTTKFDTAVPVIFLIVSLSKAQFCTVSGHPISKPIWTDLSDSGIIERFGRICRNLSHYHSGSSKKQGLYRIKYILRLSCARTLARKHKSTVRTFLQRLGSRLLEEFFTEGEQDLSLILPKAIPFPFQGSHRERIWYLDIIRINDLVNRL</sequence>
<evidence type="ECO:0000255" key="1">
    <source>
        <dbReference type="HAMAP-Rule" id="MF_01390"/>
    </source>
</evidence>
<proteinExistence type="inferred from homology"/>
<reference key="1">
    <citation type="submission" date="2005-07" db="EMBL/GenBank/DDBJ databases">
        <title>Environmental energy and species richness in flowering plants.</title>
        <authorList>
            <person name="Davies T.J."/>
        </authorList>
    </citation>
    <scope>NUCLEOTIDE SEQUENCE [GENOMIC DNA]</scope>
</reference>
<geneLocation type="chloroplast"/>